<name>CADC_STAAU</name>
<sequence>MKKKDTCEIFCYDEEKVNRIQGDLQTVDISGVSQILKAIADENRAKITYALCQDEELCVCDIANILGVTIANASHHLRTLYKQGVVNFRKEGKLALYSLGDEHIRQIMMIALAHKKEVKVNV</sequence>
<geneLocation type="plasmid">
    <name>pI258</name>
</geneLocation>
<protein>
    <recommendedName>
        <fullName>Cadmium resistance transcriptional regulatory protein CadC</fullName>
    </recommendedName>
    <alternativeName>
        <fullName>Cadmium efflux system accessory protein</fullName>
    </alternativeName>
</protein>
<comment type="function">
    <text evidence="2 3 4 6 7">Metal-binding repressor for the cad operon. Involved in resistance to heavy metals, such as cadmium, bismuth, zinc or lead. Binds 2 metal ions per subunit. Metal binding to the N-terminal regulatory site causes the repressor to dissociate from the DNA.</text>
</comment>
<comment type="subunit">
    <text evidence="3 4 5 6">Homodimer.</text>
</comment>
<comment type="miscellaneous">
    <text>The N-terminal, regulatory metal binding site 1 has higher affinity for cadmium than for zinc. The second metal binding site has higher affinity for zinc and has no regulatory function.</text>
</comment>
<proteinExistence type="evidence at protein level"/>
<reference key="1">
    <citation type="journal article" date="1989" name="Proc. Natl. Acad. Sci. U.S.A.">
        <title>Cadmium resistance from Staphylococcus aureus plasmid pI258 cadA gene results from a cadmium-efflux ATPase.</title>
        <authorList>
            <person name="Nucifora G."/>
            <person name="Chu L."/>
            <person name="Misra T.K."/>
            <person name="Silver S."/>
        </authorList>
    </citation>
    <scope>NUCLEOTIDE SEQUENCE [GENOMIC DNA]</scope>
</reference>
<reference key="2">
    <citation type="journal article" date="1991" name="J. Bacteriol.">
        <title>A second gene in the Staphylococcus aureus cadA cadmium resistance determinant of plasmid pI258.</title>
        <authorList>
            <person name="Yoon K.P."/>
            <person name="Silver S."/>
        </authorList>
    </citation>
    <scope>IDENTIFICATION</scope>
</reference>
<reference key="3">
    <citation type="journal article" date="1995" name="J. Bacteriol.">
        <title>CadC, the transcriptional regulatory protein of the cadmium resistance system of Staphylococcus aureus plasmid pI258.</title>
        <authorList>
            <person name="Endo G."/>
            <person name="Silver S."/>
        </authorList>
    </citation>
    <scope>FUNCTION</scope>
    <scope>DNA-BINDING</scope>
</reference>
<reference key="4">
    <citation type="journal article" date="2001" name="J. Biol. Chem.">
        <title>Role of cysteinyl residues in sensing Pb(II), Cd(II), and Zn(II) by the plasmid pI258 CadC repressor.</title>
        <authorList>
            <person name="Sun Y."/>
            <person name="Wong M.D."/>
            <person name="Rosen B.P."/>
        </authorList>
    </citation>
    <scope>FUNCTION</scope>
    <scope>MUTAGENESIS OF CYS-7; CYS-11; CYS-58 AND CYS-60</scope>
</reference>
<reference key="5">
    <citation type="journal article" date="2002" name="J. Biol. Chem.">
        <title>The soft metal ion binding sites in the Staphylococcus aureus pI258 CadC Cd(II)/Pb(II)/Zn(II)-responsive repressor are formed between subunits of the homodimer.</title>
        <authorList>
            <person name="Wong M.D."/>
            <person name="Lin Y.-F."/>
            <person name="Rosen B.P."/>
        </authorList>
    </citation>
    <scope>FUNCTION</scope>
    <scope>SUBUNIT</scope>
    <scope>MUTAGENESIS OF HIS-103</scope>
    <scope>METAL BINDING SITES</scope>
</reference>
<reference key="6">
    <citation type="journal article" date="2002" name="J. Biol. Inorg. Chem.">
        <title>Characterization of a metalloregulatory bismuth(III) site in Staphylococcus aureus pI258 CadC repressor.</title>
        <authorList>
            <person name="Busenlehner L.S."/>
            <person name="Apuy J.L."/>
            <person name="Giedroc D.P."/>
        </authorList>
    </citation>
    <scope>FUNCTION</scope>
    <scope>SUBUNIT</scope>
</reference>
<reference key="7">
    <citation type="journal article" date="2005" name="J. Bacteriol.">
        <title>Crystal structure of the Staphylococcus aureus pI258 CadC Cd(II)/Pb(II)/Zn(II)-responsive repressor.</title>
        <authorList>
            <person name="Ye J."/>
            <person name="Kandegedara A."/>
            <person name="Martin P."/>
            <person name="Rosen B.P."/>
        </authorList>
    </citation>
    <scope>X-RAY CRYSTALLOGRAPHY (1.9 ANGSTROMS) IN COMPLEX WITH ZINC IONS</scope>
    <scope>SUBUNIT</scope>
</reference>
<reference key="8">
    <citation type="journal article" date="2009" name="J. Biol. Chem.">
        <title>Role of bound Zn(II) in the CadC Cd(II)/Pb(II)/Zn(II)-responsive repressor.</title>
        <authorList>
            <person name="Kandegedara A."/>
            <person name="Thiyagarajan S."/>
            <person name="Kondapalli K.C."/>
            <person name="Stemmler T.L."/>
            <person name="Rosen B.P."/>
        </authorList>
    </citation>
    <scope>X-RAY CRYSTALLOGRAPHY (1.9 ANGSTROMS) IN COMPLEX WITH METAL IONS</scope>
    <scope>FUNCTION</scope>
    <scope>CHARACTERIZATION OF METAL BINDING SITES</scope>
    <scope>SUBUNIT</scope>
    <scope>MUTAGENESIS OF CYS-7; CYS-11; CYS-58; CYS-60; ASP-101 AND HIS-103</scope>
</reference>
<feature type="chain" id="PRO_0000160620" description="Cadmium resistance transcriptional regulatory protein CadC">
    <location>
        <begin position="1"/>
        <end position="122"/>
    </location>
</feature>
<feature type="domain" description="HTH arsR-type" evidence="1">
    <location>
        <begin position="24"/>
        <end position="119"/>
    </location>
</feature>
<feature type="DNA-binding region" description="H-T-H motif" evidence="1">
    <location>
        <begin position="59"/>
        <end position="78"/>
    </location>
</feature>
<feature type="binding site">
    <location>
        <position position="7"/>
    </location>
    <ligand>
        <name>Cd(2+)</name>
        <dbReference type="ChEBI" id="CHEBI:48775"/>
        <note>ligand shared between dimeric partners</note>
    </ligand>
</feature>
<feature type="binding site">
    <location>
        <position position="11"/>
    </location>
    <ligand>
        <name>Cd(2+)</name>
        <dbReference type="ChEBI" id="CHEBI:48775"/>
        <note>ligand shared between dimeric partners</note>
    </ligand>
</feature>
<feature type="binding site">
    <location>
        <position position="58"/>
    </location>
    <ligand>
        <name>Cd(2+)</name>
        <dbReference type="ChEBI" id="CHEBI:48775"/>
        <note>ligand shared between dimeric partners</note>
    </ligand>
</feature>
<feature type="binding site">
    <location>
        <position position="60"/>
    </location>
    <ligand>
        <name>Cd(2+)</name>
        <dbReference type="ChEBI" id="CHEBI:48775"/>
        <note>ligand shared between dimeric partners</note>
    </ligand>
</feature>
<feature type="binding site">
    <location>
        <position position="101"/>
    </location>
    <ligand>
        <name>Zn(2+)</name>
        <dbReference type="ChEBI" id="CHEBI:29105"/>
        <note>ligand shared between dimeric partners</note>
    </ligand>
</feature>
<feature type="binding site">
    <location>
        <position position="103"/>
    </location>
    <ligand>
        <name>Zn(2+)</name>
        <dbReference type="ChEBI" id="CHEBI:29105"/>
        <note>ligand shared between dimeric partners</note>
    </ligand>
</feature>
<feature type="binding site">
    <location>
        <position position="114"/>
    </location>
    <ligand>
        <name>Zn(2+)</name>
        <dbReference type="ChEBI" id="CHEBI:29105"/>
        <note>ligand shared between dimeric partners</note>
    </ligand>
</feature>
<feature type="binding site">
    <location>
        <position position="117"/>
    </location>
    <ligand>
        <name>Zn(2+)</name>
        <dbReference type="ChEBI" id="CHEBI:29105"/>
        <note>ligand shared between dimeric partners</note>
    </ligand>
</feature>
<feature type="mutagenesis site" description="Abolishes dissociation from DNA; when associated with G-11; S-58 and S-60." evidence="2 6">
    <original>C</original>
    <variation>S</variation>
    <location>
        <position position="7"/>
    </location>
</feature>
<feature type="mutagenesis site" description="No effect. Abolishes dissociation from DNA; when associated with S-7; S-58 and S-60." evidence="2 6">
    <original>C</original>
    <variation>G</variation>
    <location>
        <position position="11"/>
    </location>
</feature>
<feature type="mutagenesis site" description="Abolishes dissociation from DNA; when associated with S-7; G-11 and S-60." evidence="2 6">
    <original>C</original>
    <variation>S</variation>
    <location>
        <position position="58"/>
    </location>
</feature>
<feature type="mutagenesis site" description="Abolishes dissociation from DNA; when associated with S-7; G-11 and S-58." evidence="2 6">
    <original>C</original>
    <variation>S</variation>
    <location>
        <position position="60"/>
    </location>
</feature>
<feature type="mutagenesis site" description="No effect on repressor activity; when associated with A-103." evidence="6">
    <original>D</original>
    <variation>G</variation>
    <location>
        <position position="101"/>
    </location>
</feature>
<feature type="mutagenesis site" description="No effect on repressor activity; when associated with G-101." evidence="4 6">
    <original>H</original>
    <variation>A</variation>
    <location>
        <position position="103"/>
    </location>
</feature>
<feature type="strand" evidence="9">
    <location>
        <begin position="11"/>
        <end position="13"/>
    </location>
</feature>
<feature type="helix" evidence="8">
    <location>
        <begin position="14"/>
        <end position="25"/>
    </location>
</feature>
<feature type="turn" evidence="8">
    <location>
        <begin position="26"/>
        <end position="28"/>
    </location>
</feature>
<feature type="helix" evidence="8">
    <location>
        <begin position="29"/>
        <end position="40"/>
    </location>
</feature>
<feature type="helix" evidence="8">
    <location>
        <begin position="42"/>
        <end position="53"/>
    </location>
</feature>
<feature type="helix" evidence="8">
    <location>
        <begin position="59"/>
        <end position="66"/>
    </location>
</feature>
<feature type="helix" evidence="8">
    <location>
        <begin position="70"/>
        <end position="82"/>
    </location>
</feature>
<feature type="strand" evidence="8">
    <location>
        <begin position="85"/>
        <end position="90"/>
    </location>
</feature>
<feature type="strand" evidence="8">
    <location>
        <begin position="96"/>
        <end position="100"/>
    </location>
</feature>
<feature type="helix" evidence="8">
    <location>
        <begin position="102"/>
        <end position="115"/>
    </location>
</feature>
<keyword id="KW-0002">3D-structure</keyword>
<keyword id="KW-0104">Cadmium</keyword>
<keyword id="KW-0105">Cadmium resistance</keyword>
<keyword id="KW-0238">DNA-binding</keyword>
<keyword id="KW-0479">Metal-binding</keyword>
<keyword id="KW-0614">Plasmid</keyword>
<keyword id="KW-0804">Transcription</keyword>
<keyword id="KW-0805">Transcription regulation</keyword>
<keyword id="KW-0862">Zinc</keyword>
<gene>
    <name type="primary">cadC</name>
</gene>
<evidence type="ECO:0000255" key="1">
    <source>
        <dbReference type="PROSITE-ProRule" id="PRU00340"/>
    </source>
</evidence>
<evidence type="ECO:0000269" key="2">
    <source>
    </source>
</evidence>
<evidence type="ECO:0000269" key="3">
    <source>
    </source>
</evidence>
<evidence type="ECO:0000269" key="4">
    <source>
    </source>
</evidence>
<evidence type="ECO:0000269" key="5">
    <source>
    </source>
</evidence>
<evidence type="ECO:0000269" key="6">
    <source>
    </source>
</evidence>
<evidence type="ECO:0000269" key="7">
    <source>
    </source>
</evidence>
<evidence type="ECO:0007829" key="8">
    <source>
        <dbReference type="PDB" id="1U2W"/>
    </source>
</evidence>
<evidence type="ECO:0007829" key="9">
    <source>
        <dbReference type="PDB" id="3F72"/>
    </source>
</evidence>
<dbReference type="EMBL" id="J04551">
    <property type="protein sequence ID" value="AAB59153.1"/>
    <property type="molecule type" value="Genomic_DNA"/>
</dbReference>
<dbReference type="PIR" id="B32561">
    <property type="entry name" value="B32561"/>
</dbReference>
<dbReference type="RefSeq" id="WP_000726007.1">
    <property type="nucleotide sequence ID" value="NZ_WWCF01000009.1"/>
</dbReference>
<dbReference type="RefSeq" id="YP_006937601.1">
    <property type="nucleotide sequence ID" value="NC_013319.1"/>
</dbReference>
<dbReference type="RefSeq" id="YP_006937788.1">
    <property type="nucleotide sequence ID" value="NC_013323.1"/>
</dbReference>
<dbReference type="RefSeq" id="YP_006938262.1">
    <property type="nucleotide sequence ID" value="NC_013337.1"/>
</dbReference>
<dbReference type="RefSeq" id="YP_006938636.1">
    <property type="nucleotide sequence ID" value="NC_013347.1"/>
</dbReference>
<dbReference type="RefSeq" id="YP_006938769.1">
    <property type="nucleotide sequence ID" value="NC_013352.1"/>
</dbReference>
<dbReference type="PDB" id="1U2W">
    <property type="method" value="X-ray"/>
    <property type="resolution" value="1.90 A"/>
    <property type="chains" value="A/B/C/D=1-122"/>
</dbReference>
<dbReference type="PDB" id="3F72">
    <property type="method" value="X-ray"/>
    <property type="resolution" value="2.31 A"/>
    <property type="chains" value="A/B/C/D/E/F=1-122"/>
</dbReference>
<dbReference type="PDBsum" id="1U2W"/>
<dbReference type="PDBsum" id="3F72"/>
<dbReference type="SMR" id="P20047"/>
<dbReference type="EvolutionaryTrace" id="P20047"/>
<dbReference type="GO" id="GO:0003677">
    <property type="term" value="F:DNA binding"/>
    <property type="evidence" value="ECO:0007669"/>
    <property type="project" value="UniProtKB-KW"/>
</dbReference>
<dbReference type="GO" id="GO:0003700">
    <property type="term" value="F:DNA-binding transcription factor activity"/>
    <property type="evidence" value="ECO:0007669"/>
    <property type="project" value="InterPro"/>
</dbReference>
<dbReference type="GO" id="GO:0046872">
    <property type="term" value="F:metal ion binding"/>
    <property type="evidence" value="ECO:0007669"/>
    <property type="project" value="UniProtKB-KW"/>
</dbReference>
<dbReference type="GO" id="GO:0046686">
    <property type="term" value="P:response to cadmium ion"/>
    <property type="evidence" value="ECO:0007669"/>
    <property type="project" value="UniProtKB-KW"/>
</dbReference>
<dbReference type="CDD" id="cd00090">
    <property type="entry name" value="HTH_ARSR"/>
    <property type="match status" value="1"/>
</dbReference>
<dbReference type="Gene3D" id="1.10.10.10">
    <property type="entry name" value="Winged helix-like DNA-binding domain superfamily/Winged helix DNA-binding domain"/>
    <property type="match status" value="1"/>
</dbReference>
<dbReference type="InterPro" id="IPR011991">
    <property type="entry name" value="ArsR-like_HTH"/>
</dbReference>
<dbReference type="InterPro" id="IPR018334">
    <property type="entry name" value="ArsR_HTH"/>
</dbReference>
<dbReference type="InterPro" id="IPR001845">
    <property type="entry name" value="HTH_ArsR_DNA-bd_dom"/>
</dbReference>
<dbReference type="InterPro" id="IPR051011">
    <property type="entry name" value="Metal_resp_trans_reg"/>
</dbReference>
<dbReference type="InterPro" id="IPR036388">
    <property type="entry name" value="WH-like_DNA-bd_sf"/>
</dbReference>
<dbReference type="InterPro" id="IPR036390">
    <property type="entry name" value="WH_DNA-bd_sf"/>
</dbReference>
<dbReference type="NCBIfam" id="NF033788">
    <property type="entry name" value="HTH_metalloreg"/>
    <property type="match status" value="1"/>
</dbReference>
<dbReference type="PANTHER" id="PTHR43132">
    <property type="entry name" value="ARSENICAL RESISTANCE OPERON REPRESSOR ARSR-RELATED"/>
    <property type="match status" value="1"/>
</dbReference>
<dbReference type="PANTHER" id="PTHR43132:SF6">
    <property type="entry name" value="HTH-TYPE TRANSCRIPTIONAL REPRESSOR CZRA"/>
    <property type="match status" value="1"/>
</dbReference>
<dbReference type="Pfam" id="PF01022">
    <property type="entry name" value="HTH_5"/>
    <property type="match status" value="1"/>
</dbReference>
<dbReference type="PRINTS" id="PR00778">
    <property type="entry name" value="HTHARSR"/>
</dbReference>
<dbReference type="SMART" id="SM00418">
    <property type="entry name" value="HTH_ARSR"/>
    <property type="match status" value="1"/>
</dbReference>
<dbReference type="SUPFAM" id="SSF46785">
    <property type="entry name" value="Winged helix' DNA-binding domain"/>
    <property type="match status" value="1"/>
</dbReference>
<dbReference type="PROSITE" id="PS00846">
    <property type="entry name" value="HTH_ARSR_1"/>
    <property type="match status" value="1"/>
</dbReference>
<dbReference type="PROSITE" id="PS50987">
    <property type="entry name" value="HTH_ARSR_2"/>
    <property type="match status" value="1"/>
</dbReference>
<organism>
    <name type="scientific">Staphylococcus aureus</name>
    <dbReference type="NCBI Taxonomy" id="1280"/>
    <lineage>
        <taxon>Bacteria</taxon>
        <taxon>Bacillati</taxon>
        <taxon>Bacillota</taxon>
        <taxon>Bacilli</taxon>
        <taxon>Bacillales</taxon>
        <taxon>Staphylococcaceae</taxon>
        <taxon>Staphylococcus</taxon>
    </lineage>
</organism>
<accession>P20047</accession>